<organism>
    <name type="scientific">Clostridium botulinum (strain Hall / ATCC 3502 / NCTC 13319 / Type A)</name>
    <dbReference type="NCBI Taxonomy" id="441771"/>
    <lineage>
        <taxon>Bacteria</taxon>
        <taxon>Bacillati</taxon>
        <taxon>Bacillota</taxon>
        <taxon>Clostridia</taxon>
        <taxon>Eubacteriales</taxon>
        <taxon>Clostridiaceae</taxon>
        <taxon>Clostridium</taxon>
    </lineage>
</organism>
<reference key="1">
    <citation type="journal article" date="2007" name="Genome Res.">
        <title>Genome sequence of a proteolytic (Group I) Clostridium botulinum strain Hall A and comparative analysis of the clostridial genomes.</title>
        <authorList>
            <person name="Sebaihia M."/>
            <person name="Peck M.W."/>
            <person name="Minton N.P."/>
            <person name="Thomson N.R."/>
            <person name="Holden M.T.G."/>
            <person name="Mitchell W.J."/>
            <person name="Carter A.T."/>
            <person name="Bentley S.D."/>
            <person name="Mason D.R."/>
            <person name="Crossman L."/>
            <person name="Paul C.J."/>
            <person name="Ivens A."/>
            <person name="Wells-Bennik M.H.J."/>
            <person name="Davis I.J."/>
            <person name="Cerdeno-Tarraga A.M."/>
            <person name="Churcher C."/>
            <person name="Quail M.A."/>
            <person name="Chillingworth T."/>
            <person name="Feltwell T."/>
            <person name="Fraser A."/>
            <person name="Goodhead I."/>
            <person name="Hance Z."/>
            <person name="Jagels K."/>
            <person name="Larke N."/>
            <person name="Maddison M."/>
            <person name="Moule S."/>
            <person name="Mungall K."/>
            <person name="Norbertczak H."/>
            <person name="Rabbinowitsch E."/>
            <person name="Sanders M."/>
            <person name="Simmonds M."/>
            <person name="White B."/>
            <person name="Whithead S."/>
            <person name="Parkhill J."/>
        </authorList>
    </citation>
    <scope>NUCLEOTIDE SEQUENCE [LARGE SCALE GENOMIC DNA]</scope>
    <source>
        <strain>Hall / ATCC 3502 / NCTC 13319 / Type A</strain>
    </source>
</reference>
<reference key="2">
    <citation type="journal article" date="2007" name="PLoS ONE">
        <title>Analysis of the neurotoxin complex genes in Clostridium botulinum A1-A4 and B1 strains: BoNT/A3, /Ba4 and /B1 clusters are located within plasmids.</title>
        <authorList>
            <person name="Smith T.J."/>
            <person name="Hill K.K."/>
            <person name="Foley B.T."/>
            <person name="Detter J.C."/>
            <person name="Munk A.C."/>
            <person name="Bruce D.C."/>
            <person name="Doggett N.A."/>
            <person name="Smith L.A."/>
            <person name="Marks J.D."/>
            <person name="Xie G."/>
            <person name="Brettin T.S."/>
        </authorList>
    </citation>
    <scope>NUCLEOTIDE SEQUENCE [LARGE SCALE GENOMIC DNA]</scope>
    <source>
        <strain>Hall / ATCC 3502 / NCTC 13319 / Type A</strain>
    </source>
</reference>
<comment type="function">
    <text evidence="1">Catalyzes the conversion of glucosamine-6-phosphate to glucosamine-1-phosphate.</text>
</comment>
<comment type="catalytic activity">
    <reaction evidence="1">
        <text>alpha-D-glucosamine 1-phosphate = D-glucosamine 6-phosphate</text>
        <dbReference type="Rhea" id="RHEA:23424"/>
        <dbReference type="ChEBI" id="CHEBI:58516"/>
        <dbReference type="ChEBI" id="CHEBI:58725"/>
        <dbReference type="EC" id="5.4.2.10"/>
    </reaction>
</comment>
<comment type="cofactor">
    <cofactor evidence="1">
        <name>Mg(2+)</name>
        <dbReference type="ChEBI" id="CHEBI:18420"/>
    </cofactor>
    <text evidence="1">Binds 1 Mg(2+) ion per subunit.</text>
</comment>
<comment type="PTM">
    <text evidence="1">Activated by phosphorylation.</text>
</comment>
<comment type="similarity">
    <text evidence="1">Belongs to the phosphohexose mutase family.</text>
</comment>
<dbReference type="EC" id="5.4.2.10" evidence="1"/>
<dbReference type="EMBL" id="CP000727">
    <property type="protein sequence ID" value="ABS37431.1"/>
    <property type="molecule type" value="Genomic_DNA"/>
</dbReference>
<dbReference type="EMBL" id="AM412317">
    <property type="protein sequence ID" value="CAL84980.1"/>
    <property type="molecule type" value="Genomic_DNA"/>
</dbReference>
<dbReference type="RefSeq" id="WP_012048332.1">
    <property type="nucleotide sequence ID" value="NC_009698.1"/>
</dbReference>
<dbReference type="RefSeq" id="YP_001255901.1">
    <property type="nucleotide sequence ID" value="NC_009495.1"/>
</dbReference>
<dbReference type="RefSeq" id="YP_001389144.1">
    <property type="nucleotide sequence ID" value="NC_009698.1"/>
</dbReference>
<dbReference type="SMR" id="A5I7E5"/>
<dbReference type="GeneID" id="5187856"/>
<dbReference type="KEGG" id="cbh:CLC_3365"/>
<dbReference type="KEGG" id="cbo:CBO3420"/>
<dbReference type="PATRIC" id="fig|413999.7.peg.3396"/>
<dbReference type="HOGENOM" id="CLU_016950_7_0_9"/>
<dbReference type="PRO" id="PR:A5I7E5"/>
<dbReference type="Proteomes" id="UP000001986">
    <property type="component" value="Chromosome"/>
</dbReference>
<dbReference type="GO" id="GO:0005829">
    <property type="term" value="C:cytosol"/>
    <property type="evidence" value="ECO:0000318"/>
    <property type="project" value="GO_Central"/>
</dbReference>
<dbReference type="GO" id="GO:0000287">
    <property type="term" value="F:magnesium ion binding"/>
    <property type="evidence" value="ECO:0007669"/>
    <property type="project" value="UniProtKB-UniRule"/>
</dbReference>
<dbReference type="GO" id="GO:0008966">
    <property type="term" value="F:phosphoglucosamine mutase activity"/>
    <property type="evidence" value="ECO:0000318"/>
    <property type="project" value="GO_Central"/>
</dbReference>
<dbReference type="GO" id="GO:0004615">
    <property type="term" value="F:phosphomannomutase activity"/>
    <property type="evidence" value="ECO:0000318"/>
    <property type="project" value="GO_Central"/>
</dbReference>
<dbReference type="GO" id="GO:0005975">
    <property type="term" value="P:carbohydrate metabolic process"/>
    <property type="evidence" value="ECO:0007669"/>
    <property type="project" value="InterPro"/>
</dbReference>
<dbReference type="GO" id="GO:0009252">
    <property type="term" value="P:peptidoglycan biosynthetic process"/>
    <property type="evidence" value="ECO:0000318"/>
    <property type="project" value="GO_Central"/>
</dbReference>
<dbReference type="GO" id="GO:0006048">
    <property type="term" value="P:UDP-N-acetylglucosamine biosynthetic process"/>
    <property type="evidence" value="ECO:0000318"/>
    <property type="project" value="GO_Central"/>
</dbReference>
<dbReference type="CDD" id="cd05802">
    <property type="entry name" value="GlmM"/>
    <property type="match status" value="1"/>
</dbReference>
<dbReference type="FunFam" id="3.30.310.50:FF:000001">
    <property type="entry name" value="Phosphoglucosamine mutase"/>
    <property type="match status" value="1"/>
</dbReference>
<dbReference type="FunFam" id="3.40.120.10:FF:000001">
    <property type="entry name" value="Phosphoglucosamine mutase"/>
    <property type="match status" value="1"/>
</dbReference>
<dbReference type="FunFam" id="3.40.120.10:FF:000002">
    <property type="entry name" value="Phosphoglucosamine mutase"/>
    <property type="match status" value="1"/>
</dbReference>
<dbReference type="Gene3D" id="3.40.120.10">
    <property type="entry name" value="Alpha-D-Glucose-1,6-Bisphosphate, subunit A, domain 3"/>
    <property type="match status" value="3"/>
</dbReference>
<dbReference type="Gene3D" id="3.30.310.50">
    <property type="entry name" value="Alpha-D-phosphohexomutase, C-terminal domain"/>
    <property type="match status" value="1"/>
</dbReference>
<dbReference type="HAMAP" id="MF_01554_B">
    <property type="entry name" value="GlmM_B"/>
    <property type="match status" value="1"/>
</dbReference>
<dbReference type="InterPro" id="IPR005844">
    <property type="entry name" value="A-D-PHexomutase_a/b/a-I"/>
</dbReference>
<dbReference type="InterPro" id="IPR016055">
    <property type="entry name" value="A-D-PHexomutase_a/b/a-I/II/III"/>
</dbReference>
<dbReference type="InterPro" id="IPR005845">
    <property type="entry name" value="A-D-PHexomutase_a/b/a-II"/>
</dbReference>
<dbReference type="InterPro" id="IPR005846">
    <property type="entry name" value="A-D-PHexomutase_a/b/a-III"/>
</dbReference>
<dbReference type="InterPro" id="IPR005843">
    <property type="entry name" value="A-D-PHexomutase_C"/>
</dbReference>
<dbReference type="InterPro" id="IPR036900">
    <property type="entry name" value="A-D-PHexomutase_C_sf"/>
</dbReference>
<dbReference type="InterPro" id="IPR016066">
    <property type="entry name" value="A-D-PHexomutase_CS"/>
</dbReference>
<dbReference type="InterPro" id="IPR005841">
    <property type="entry name" value="Alpha-D-phosphohexomutase_SF"/>
</dbReference>
<dbReference type="InterPro" id="IPR006352">
    <property type="entry name" value="GlmM_bact"/>
</dbReference>
<dbReference type="InterPro" id="IPR050060">
    <property type="entry name" value="Phosphoglucosamine_mutase"/>
</dbReference>
<dbReference type="NCBIfam" id="TIGR01455">
    <property type="entry name" value="glmM"/>
    <property type="match status" value="1"/>
</dbReference>
<dbReference type="NCBIfam" id="NF008139">
    <property type="entry name" value="PRK10887.1"/>
    <property type="match status" value="1"/>
</dbReference>
<dbReference type="PANTHER" id="PTHR42946:SF1">
    <property type="entry name" value="PHOSPHOGLUCOMUTASE (ALPHA-D-GLUCOSE-1,6-BISPHOSPHATE-DEPENDENT)"/>
    <property type="match status" value="1"/>
</dbReference>
<dbReference type="PANTHER" id="PTHR42946">
    <property type="entry name" value="PHOSPHOHEXOSE MUTASE"/>
    <property type="match status" value="1"/>
</dbReference>
<dbReference type="Pfam" id="PF02878">
    <property type="entry name" value="PGM_PMM_I"/>
    <property type="match status" value="1"/>
</dbReference>
<dbReference type="Pfam" id="PF02879">
    <property type="entry name" value="PGM_PMM_II"/>
    <property type="match status" value="1"/>
</dbReference>
<dbReference type="Pfam" id="PF02880">
    <property type="entry name" value="PGM_PMM_III"/>
    <property type="match status" value="1"/>
</dbReference>
<dbReference type="Pfam" id="PF00408">
    <property type="entry name" value="PGM_PMM_IV"/>
    <property type="match status" value="1"/>
</dbReference>
<dbReference type="PRINTS" id="PR00509">
    <property type="entry name" value="PGMPMM"/>
</dbReference>
<dbReference type="SUPFAM" id="SSF55957">
    <property type="entry name" value="Phosphoglucomutase, C-terminal domain"/>
    <property type="match status" value="1"/>
</dbReference>
<dbReference type="SUPFAM" id="SSF53738">
    <property type="entry name" value="Phosphoglucomutase, first 3 domains"/>
    <property type="match status" value="3"/>
</dbReference>
<dbReference type="PROSITE" id="PS00710">
    <property type="entry name" value="PGM_PMM"/>
    <property type="match status" value="1"/>
</dbReference>
<name>GLMM_CLOBH</name>
<evidence type="ECO:0000255" key="1">
    <source>
        <dbReference type="HAMAP-Rule" id="MF_01554"/>
    </source>
</evidence>
<sequence length="449" mass="48893">MGRMFGTDGVRGIANKELTADLAYKLGKAGAFILTEGTHRSKILVGMDTRISGDMLESALVAGILSVGAEAICVGVIPTPAIAYLTRKYNADAGVVISASHNPVEYNGIKFFNKNGYKLSDELEDSIQALIRDDFKDVPVLTGENIGRKIEEDGEAIRDYIDFAKSTIKGDLKGLKVALDCANGASYITSVEAFKELGAEVHVINNKPDGININRNSGSTHPEDLMEYVVKNNCHMGLAFDGDADRCLAIDEKGNLINGDFILAICGKELKKQGRLKKNTIVVTVMSNLGLDIAMKKEEINTIKTKVGDRYVLEEMLKNDYAIGGEQSGHIIFSDYNTTGDGLVTALQLAHIVKESGKTFSELCSIMKELPQVLVNAKVPNDQKDIYLKDEEIKSEIDTITKNLDGSGRVLIRPSGTEPLVRVMLEGENQKEIDKLAHGLAKLIENKVK</sequence>
<gene>
    <name evidence="1" type="primary">glmM</name>
    <name type="ordered locus">CBO3420</name>
    <name type="ordered locus">CLC_3365</name>
</gene>
<protein>
    <recommendedName>
        <fullName evidence="1">Phosphoglucosamine mutase</fullName>
        <ecNumber evidence="1">5.4.2.10</ecNumber>
    </recommendedName>
</protein>
<accession>A5I7E5</accession>
<accession>A7G8M9</accession>
<feature type="chain" id="PRO_1000068901" description="Phosphoglucosamine mutase">
    <location>
        <begin position="1"/>
        <end position="449"/>
    </location>
</feature>
<feature type="active site" description="Phosphoserine intermediate" evidence="1">
    <location>
        <position position="100"/>
    </location>
</feature>
<feature type="binding site" description="via phosphate group" evidence="1">
    <location>
        <position position="100"/>
    </location>
    <ligand>
        <name>Mg(2+)</name>
        <dbReference type="ChEBI" id="CHEBI:18420"/>
    </ligand>
</feature>
<feature type="binding site" evidence="1">
    <location>
        <position position="241"/>
    </location>
    <ligand>
        <name>Mg(2+)</name>
        <dbReference type="ChEBI" id="CHEBI:18420"/>
    </ligand>
</feature>
<feature type="binding site" evidence="1">
    <location>
        <position position="243"/>
    </location>
    <ligand>
        <name>Mg(2+)</name>
        <dbReference type="ChEBI" id="CHEBI:18420"/>
    </ligand>
</feature>
<feature type="binding site" evidence="1">
    <location>
        <position position="245"/>
    </location>
    <ligand>
        <name>Mg(2+)</name>
        <dbReference type="ChEBI" id="CHEBI:18420"/>
    </ligand>
</feature>
<feature type="modified residue" description="Phosphoserine" evidence="1">
    <location>
        <position position="100"/>
    </location>
</feature>
<keyword id="KW-0413">Isomerase</keyword>
<keyword id="KW-0460">Magnesium</keyword>
<keyword id="KW-0479">Metal-binding</keyword>
<keyword id="KW-0597">Phosphoprotein</keyword>
<keyword id="KW-1185">Reference proteome</keyword>
<proteinExistence type="inferred from homology"/>